<organism>
    <name type="scientific">Alcanivorax borkumensis (strain ATCC 700651 / DSM 11573 / NCIMB 13689 / SK2)</name>
    <dbReference type="NCBI Taxonomy" id="393595"/>
    <lineage>
        <taxon>Bacteria</taxon>
        <taxon>Pseudomonadati</taxon>
        <taxon>Pseudomonadota</taxon>
        <taxon>Gammaproteobacteria</taxon>
        <taxon>Oceanospirillales</taxon>
        <taxon>Alcanivoracaceae</taxon>
        <taxon>Alcanivorax</taxon>
    </lineage>
</organism>
<sequence length="176" mass="18818">MPLNLEDKRAIVASVNAVAAEALSAVVADYRGLTVSQMTELRSKARETGVYLKVVRNTLAKFAVKDTEFECLNDALVGPTVLAFSKDDPGAAARLIKDFAKDHDALEVKALAVGGVTYGAQDIDVLAKLPTRDEAISQLMSVMQAPVAKFVRTLNEVPGKFVRTVAAVKDQKQSAA</sequence>
<name>RL10_ALCBS</name>
<comment type="function">
    <text evidence="1">Forms part of the ribosomal stalk, playing a central role in the interaction of the ribosome with GTP-bound translation factors.</text>
</comment>
<comment type="subunit">
    <text evidence="1">Part of the ribosomal stalk of the 50S ribosomal subunit. The N-terminus interacts with L11 and the large rRNA to form the base of the stalk. The C-terminus forms an elongated spine to which L12 dimers bind in a sequential fashion forming a multimeric L10(L12)X complex.</text>
</comment>
<comment type="similarity">
    <text evidence="1">Belongs to the universal ribosomal protein uL10 family.</text>
</comment>
<reference key="1">
    <citation type="journal article" date="2006" name="Nat. Biotechnol.">
        <title>Genome sequence of the ubiquitous hydrocarbon-degrading marine bacterium Alcanivorax borkumensis.</title>
        <authorList>
            <person name="Schneiker S."/>
            <person name="Martins dos Santos V.A.P."/>
            <person name="Bartels D."/>
            <person name="Bekel T."/>
            <person name="Brecht M."/>
            <person name="Buhrmester J."/>
            <person name="Chernikova T.N."/>
            <person name="Denaro R."/>
            <person name="Ferrer M."/>
            <person name="Gertler C."/>
            <person name="Goesmann A."/>
            <person name="Golyshina O.V."/>
            <person name="Kaminski F."/>
            <person name="Khachane A.N."/>
            <person name="Lang S."/>
            <person name="Linke B."/>
            <person name="McHardy A.C."/>
            <person name="Meyer F."/>
            <person name="Nechitaylo T."/>
            <person name="Puehler A."/>
            <person name="Regenhardt D."/>
            <person name="Rupp O."/>
            <person name="Sabirova J.S."/>
            <person name="Selbitschka W."/>
            <person name="Yakimov M.M."/>
            <person name="Timmis K.N."/>
            <person name="Vorhoelter F.-J."/>
            <person name="Weidner S."/>
            <person name="Kaiser O."/>
            <person name="Golyshin P.N."/>
        </authorList>
    </citation>
    <scope>NUCLEOTIDE SEQUENCE [LARGE SCALE GENOMIC DNA]</scope>
    <source>
        <strain>ATCC 700651 / DSM 11573 / NCIMB 13689 / SK2</strain>
    </source>
</reference>
<accession>Q0VSM4</accession>
<protein>
    <recommendedName>
        <fullName evidence="1">Large ribosomal subunit protein uL10</fullName>
    </recommendedName>
    <alternativeName>
        <fullName evidence="2">50S ribosomal protein L10</fullName>
    </alternativeName>
</protein>
<evidence type="ECO:0000255" key="1">
    <source>
        <dbReference type="HAMAP-Rule" id="MF_00362"/>
    </source>
</evidence>
<evidence type="ECO:0000305" key="2"/>
<dbReference type="EMBL" id="AM286690">
    <property type="protein sequence ID" value="CAL15824.1"/>
    <property type="molecule type" value="Genomic_DNA"/>
</dbReference>
<dbReference type="RefSeq" id="WP_011587671.1">
    <property type="nucleotide sequence ID" value="NC_008260.1"/>
</dbReference>
<dbReference type="SMR" id="Q0VSM4"/>
<dbReference type="STRING" id="393595.ABO_0376"/>
<dbReference type="KEGG" id="abo:ABO_0376"/>
<dbReference type="eggNOG" id="COG0244">
    <property type="taxonomic scope" value="Bacteria"/>
</dbReference>
<dbReference type="HOGENOM" id="CLU_092227_0_1_6"/>
<dbReference type="OrthoDB" id="9808307at2"/>
<dbReference type="Proteomes" id="UP000008871">
    <property type="component" value="Chromosome"/>
</dbReference>
<dbReference type="GO" id="GO:0015934">
    <property type="term" value="C:large ribosomal subunit"/>
    <property type="evidence" value="ECO:0007669"/>
    <property type="project" value="InterPro"/>
</dbReference>
<dbReference type="GO" id="GO:0070180">
    <property type="term" value="F:large ribosomal subunit rRNA binding"/>
    <property type="evidence" value="ECO:0007669"/>
    <property type="project" value="UniProtKB-UniRule"/>
</dbReference>
<dbReference type="GO" id="GO:0003735">
    <property type="term" value="F:structural constituent of ribosome"/>
    <property type="evidence" value="ECO:0007669"/>
    <property type="project" value="InterPro"/>
</dbReference>
<dbReference type="GO" id="GO:0006412">
    <property type="term" value="P:translation"/>
    <property type="evidence" value="ECO:0007669"/>
    <property type="project" value="UniProtKB-UniRule"/>
</dbReference>
<dbReference type="CDD" id="cd05797">
    <property type="entry name" value="Ribosomal_L10"/>
    <property type="match status" value="1"/>
</dbReference>
<dbReference type="FunFam" id="3.30.70.1730:FF:000001">
    <property type="entry name" value="50S ribosomal protein L10"/>
    <property type="match status" value="1"/>
</dbReference>
<dbReference type="Gene3D" id="3.30.70.1730">
    <property type="match status" value="1"/>
</dbReference>
<dbReference type="Gene3D" id="6.10.250.2350">
    <property type="match status" value="2"/>
</dbReference>
<dbReference type="HAMAP" id="MF_00362">
    <property type="entry name" value="Ribosomal_uL10"/>
    <property type="match status" value="1"/>
</dbReference>
<dbReference type="InterPro" id="IPR001790">
    <property type="entry name" value="Ribosomal_uL10"/>
</dbReference>
<dbReference type="InterPro" id="IPR043141">
    <property type="entry name" value="Ribosomal_uL10-like_sf"/>
</dbReference>
<dbReference type="InterPro" id="IPR022973">
    <property type="entry name" value="Ribosomal_uL10_bac"/>
</dbReference>
<dbReference type="InterPro" id="IPR047865">
    <property type="entry name" value="Ribosomal_uL10_bac_type"/>
</dbReference>
<dbReference type="InterPro" id="IPR002363">
    <property type="entry name" value="Ribosomal_uL10_CS_bac"/>
</dbReference>
<dbReference type="NCBIfam" id="NF000955">
    <property type="entry name" value="PRK00099.1-1"/>
    <property type="match status" value="1"/>
</dbReference>
<dbReference type="PANTHER" id="PTHR11560">
    <property type="entry name" value="39S RIBOSOMAL PROTEIN L10, MITOCHONDRIAL"/>
    <property type="match status" value="1"/>
</dbReference>
<dbReference type="Pfam" id="PF00466">
    <property type="entry name" value="Ribosomal_L10"/>
    <property type="match status" value="1"/>
</dbReference>
<dbReference type="SUPFAM" id="SSF160369">
    <property type="entry name" value="Ribosomal protein L10-like"/>
    <property type="match status" value="1"/>
</dbReference>
<dbReference type="PROSITE" id="PS01109">
    <property type="entry name" value="RIBOSOMAL_L10"/>
    <property type="match status" value="1"/>
</dbReference>
<keyword id="KW-1185">Reference proteome</keyword>
<keyword id="KW-0687">Ribonucleoprotein</keyword>
<keyword id="KW-0689">Ribosomal protein</keyword>
<keyword id="KW-0694">RNA-binding</keyword>
<keyword id="KW-0699">rRNA-binding</keyword>
<gene>
    <name evidence="1" type="primary">rplJ</name>
    <name type="ordered locus">ABO_0376</name>
</gene>
<feature type="chain" id="PRO_1000005462" description="Large ribosomal subunit protein uL10">
    <location>
        <begin position="1"/>
        <end position="176"/>
    </location>
</feature>
<proteinExistence type="inferred from homology"/>